<sequence length="603" mass="68035">MPRFITELKRTHSCGELTKADIGKEVVLFGWVNNRRDHGGAVFIDLRDRAGLTQVVFEEDVRPDVHELAGQLRLEYCVGVRGKVVSRGGNVNPKLRTGEIEVHASDLEIFNRSEPAPFQIEDEIDTGEEKRLQYRYLDLRRAPLQRTLMTRAKVNHLTRNYFTDGGFLELETPFMVKYTPGGARNFLVPSRLNPGKFYALAESPQLFKQLYMMAGFDRYFQIVRCFRDEDLRLDRQPEFTQIDVEMSFVEQNDVFDVMEGLVVKLWKEVLGIEIPRPFQRMPFEESMAKYGNDKPDLRFDMPHVVLTDLVRQHDGGGVPLMHEAVKGKGIVKAMRVPASANFSRTEIDKLEEYVKGMGAKGLARAKVGEGGEWTQSPLAKTITPALRQAINEACEAKPGDLLLFQFGKDSVVHTVMANLRVHLAKRMGLIPEYGSGGAWRFLWVVNPPLFEYDEESGQWAAAHHAFTRPHDSDLQFLESDPGKVNCYRYDLVLNGFEIGGGSIRLHDPEVQARVFKAMGISDEEARSKFGFLLDALKMGAPPHGGIALGMDRLVMLLTGAESLRDVVAWPKTQKGTDLMTGAPGDVDARQLRELYVKSTYEPK</sequence>
<feature type="chain" id="PRO_1000090957" description="Aspartate--tRNA(Asp/Asn) ligase">
    <location>
        <begin position="1"/>
        <end position="603"/>
    </location>
</feature>
<feature type="region of interest" description="Aspartate" evidence="1">
    <location>
        <begin position="205"/>
        <end position="208"/>
    </location>
</feature>
<feature type="binding site" evidence="1">
    <location>
        <begin position="227"/>
        <end position="229"/>
    </location>
    <ligand>
        <name>ATP</name>
        <dbReference type="ChEBI" id="CHEBI:30616"/>
    </ligand>
</feature>
<feature type="binding site" evidence="1">
    <location>
        <position position="227"/>
    </location>
    <ligand>
        <name>L-aspartate</name>
        <dbReference type="ChEBI" id="CHEBI:29991"/>
    </ligand>
</feature>
<feature type="binding site" evidence="1">
    <location>
        <position position="236"/>
    </location>
    <ligand>
        <name>ATP</name>
        <dbReference type="ChEBI" id="CHEBI:30616"/>
    </ligand>
</feature>
<feature type="binding site" evidence="1">
    <location>
        <position position="463"/>
    </location>
    <ligand>
        <name>L-aspartate</name>
        <dbReference type="ChEBI" id="CHEBI:29991"/>
    </ligand>
</feature>
<feature type="binding site" evidence="1">
    <location>
        <position position="497"/>
    </location>
    <ligand>
        <name>ATP</name>
        <dbReference type="ChEBI" id="CHEBI:30616"/>
    </ligand>
</feature>
<feature type="binding site" evidence="1">
    <location>
        <position position="504"/>
    </location>
    <ligand>
        <name>L-aspartate</name>
        <dbReference type="ChEBI" id="CHEBI:29991"/>
    </ligand>
</feature>
<feature type="binding site" evidence="1">
    <location>
        <begin position="549"/>
        <end position="552"/>
    </location>
    <ligand>
        <name>ATP</name>
        <dbReference type="ChEBI" id="CHEBI:30616"/>
    </ligand>
</feature>
<feature type="site" description="Important for tRNA non-discrimination" evidence="1">
    <location>
        <position position="38"/>
    </location>
</feature>
<feature type="site" description="Important for tRNA non-discrimination" evidence="1">
    <location>
        <position position="89"/>
    </location>
</feature>
<reference key="1">
    <citation type="submission" date="2008-08" db="EMBL/GenBank/DDBJ databases">
        <title>Complete sequence of Anaeromyxobacter sp. K.</title>
        <authorList>
            <consortium name="US DOE Joint Genome Institute"/>
            <person name="Lucas S."/>
            <person name="Copeland A."/>
            <person name="Lapidus A."/>
            <person name="Glavina del Rio T."/>
            <person name="Dalin E."/>
            <person name="Tice H."/>
            <person name="Bruce D."/>
            <person name="Goodwin L."/>
            <person name="Pitluck S."/>
            <person name="Saunders E."/>
            <person name="Brettin T."/>
            <person name="Detter J.C."/>
            <person name="Han C."/>
            <person name="Larimer F."/>
            <person name="Land M."/>
            <person name="Hauser L."/>
            <person name="Kyrpides N."/>
            <person name="Ovchinnikiva G."/>
            <person name="Beliaev A."/>
        </authorList>
    </citation>
    <scope>NUCLEOTIDE SEQUENCE [LARGE SCALE GENOMIC DNA]</scope>
    <source>
        <strain>K</strain>
    </source>
</reference>
<comment type="function">
    <text evidence="1">Aspartyl-tRNA synthetase with relaxed tRNA specificity since it is able to aspartylate not only its cognate tRNA(Asp) but also tRNA(Asn). Reaction proceeds in two steps: L-aspartate is first activated by ATP to form Asp-AMP and then transferred to the acceptor end of tRNA(Asp/Asn).</text>
</comment>
<comment type="catalytic activity">
    <reaction evidence="1">
        <text>tRNA(Asx) + L-aspartate + ATP = L-aspartyl-tRNA(Asx) + AMP + diphosphate</text>
        <dbReference type="Rhea" id="RHEA:18349"/>
        <dbReference type="Rhea" id="RHEA-COMP:9710"/>
        <dbReference type="Rhea" id="RHEA-COMP:9711"/>
        <dbReference type="ChEBI" id="CHEBI:29991"/>
        <dbReference type="ChEBI" id="CHEBI:30616"/>
        <dbReference type="ChEBI" id="CHEBI:33019"/>
        <dbReference type="ChEBI" id="CHEBI:78442"/>
        <dbReference type="ChEBI" id="CHEBI:78516"/>
        <dbReference type="ChEBI" id="CHEBI:456215"/>
        <dbReference type="EC" id="6.1.1.23"/>
    </reaction>
</comment>
<comment type="subunit">
    <text evidence="1">Homodimer.</text>
</comment>
<comment type="subcellular location">
    <subcellularLocation>
        <location evidence="1">Cytoplasm</location>
    </subcellularLocation>
</comment>
<comment type="similarity">
    <text evidence="1">Belongs to the class-II aminoacyl-tRNA synthetase family. Type 1 subfamily.</text>
</comment>
<gene>
    <name evidence="1" type="primary">aspS</name>
    <name type="ordered locus">AnaeK_1316</name>
</gene>
<protein>
    <recommendedName>
        <fullName evidence="1">Aspartate--tRNA(Asp/Asn) ligase</fullName>
        <ecNumber evidence="1">6.1.1.23</ecNumber>
    </recommendedName>
    <alternativeName>
        <fullName evidence="1">Aspartyl-tRNA synthetase</fullName>
        <shortName evidence="1">AspRS</shortName>
    </alternativeName>
    <alternativeName>
        <fullName evidence="1">Non-discriminating aspartyl-tRNA synthetase</fullName>
        <shortName evidence="1">ND-AspRS</shortName>
    </alternativeName>
</protein>
<proteinExistence type="inferred from homology"/>
<dbReference type="EC" id="6.1.1.23" evidence="1"/>
<dbReference type="EMBL" id="CP001131">
    <property type="protein sequence ID" value="ACG72548.1"/>
    <property type="molecule type" value="Genomic_DNA"/>
</dbReference>
<dbReference type="RefSeq" id="WP_012525371.1">
    <property type="nucleotide sequence ID" value="NC_011145.1"/>
</dbReference>
<dbReference type="SMR" id="B4UIE3"/>
<dbReference type="KEGG" id="ank:AnaeK_1316"/>
<dbReference type="HOGENOM" id="CLU_014330_3_2_7"/>
<dbReference type="OrthoDB" id="9802326at2"/>
<dbReference type="Proteomes" id="UP000001871">
    <property type="component" value="Chromosome"/>
</dbReference>
<dbReference type="GO" id="GO:0005737">
    <property type="term" value="C:cytoplasm"/>
    <property type="evidence" value="ECO:0007669"/>
    <property type="project" value="UniProtKB-SubCell"/>
</dbReference>
<dbReference type="GO" id="GO:0004815">
    <property type="term" value="F:aspartate-tRNA ligase activity"/>
    <property type="evidence" value="ECO:0007669"/>
    <property type="project" value="UniProtKB-UniRule"/>
</dbReference>
<dbReference type="GO" id="GO:0050560">
    <property type="term" value="F:aspartate-tRNA(Asn) ligase activity"/>
    <property type="evidence" value="ECO:0007669"/>
    <property type="project" value="UniProtKB-EC"/>
</dbReference>
<dbReference type="GO" id="GO:0005524">
    <property type="term" value="F:ATP binding"/>
    <property type="evidence" value="ECO:0007669"/>
    <property type="project" value="UniProtKB-UniRule"/>
</dbReference>
<dbReference type="GO" id="GO:0003676">
    <property type="term" value="F:nucleic acid binding"/>
    <property type="evidence" value="ECO:0007669"/>
    <property type="project" value="InterPro"/>
</dbReference>
<dbReference type="GO" id="GO:0006422">
    <property type="term" value="P:aspartyl-tRNA aminoacylation"/>
    <property type="evidence" value="ECO:0007669"/>
    <property type="project" value="UniProtKB-UniRule"/>
</dbReference>
<dbReference type="CDD" id="cd00777">
    <property type="entry name" value="AspRS_core"/>
    <property type="match status" value="1"/>
</dbReference>
<dbReference type="CDD" id="cd04317">
    <property type="entry name" value="EcAspRS_like_N"/>
    <property type="match status" value="1"/>
</dbReference>
<dbReference type="Gene3D" id="3.30.930.10">
    <property type="entry name" value="Bira Bifunctional Protein, Domain 2"/>
    <property type="match status" value="1"/>
</dbReference>
<dbReference type="Gene3D" id="3.30.1360.30">
    <property type="entry name" value="GAD-like domain"/>
    <property type="match status" value="1"/>
</dbReference>
<dbReference type="Gene3D" id="2.40.50.140">
    <property type="entry name" value="Nucleic acid-binding proteins"/>
    <property type="match status" value="1"/>
</dbReference>
<dbReference type="HAMAP" id="MF_00044">
    <property type="entry name" value="Asp_tRNA_synth_type1"/>
    <property type="match status" value="1"/>
</dbReference>
<dbReference type="InterPro" id="IPR004364">
    <property type="entry name" value="Aa-tRNA-synt_II"/>
</dbReference>
<dbReference type="InterPro" id="IPR006195">
    <property type="entry name" value="aa-tRNA-synth_II"/>
</dbReference>
<dbReference type="InterPro" id="IPR045864">
    <property type="entry name" value="aa-tRNA-synth_II/BPL/LPL"/>
</dbReference>
<dbReference type="InterPro" id="IPR004524">
    <property type="entry name" value="Asp-tRNA-ligase_1"/>
</dbReference>
<dbReference type="InterPro" id="IPR047089">
    <property type="entry name" value="Asp-tRNA-ligase_1_N"/>
</dbReference>
<dbReference type="InterPro" id="IPR002312">
    <property type="entry name" value="Asp/Asn-tRNA-synth_IIb"/>
</dbReference>
<dbReference type="InterPro" id="IPR047090">
    <property type="entry name" value="AspRS_core"/>
</dbReference>
<dbReference type="InterPro" id="IPR004115">
    <property type="entry name" value="GAD-like_sf"/>
</dbReference>
<dbReference type="InterPro" id="IPR029351">
    <property type="entry name" value="GAD_dom"/>
</dbReference>
<dbReference type="InterPro" id="IPR012340">
    <property type="entry name" value="NA-bd_OB-fold"/>
</dbReference>
<dbReference type="InterPro" id="IPR004365">
    <property type="entry name" value="NA-bd_OB_tRNA"/>
</dbReference>
<dbReference type="NCBIfam" id="TIGR00459">
    <property type="entry name" value="aspS_bact"/>
    <property type="match status" value="1"/>
</dbReference>
<dbReference type="NCBIfam" id="NF001750">
    <property type="entry name" value="PRK00476.1"/>
    <property type="match status" value="1"/>
</dbReference>
<dbReference type="PANTHER" id="PTHR22594:SF5">
    <property type="entry name" value="ASPARTATE--TRNA LIGASE, MITOCHONDRIAL"/>
    <property type="match status" value="1"/>
</dbReference>
<dbReference type="PANTHER" id="PTHR22594">
    <property type="entry name" value="ASPARTYL/LYSYL-TRNA SYNTHETASE"/>
    <property type="match status" value="1"/>
</dbReference>
<dbReference type="Pfam" id="PF02938">
    <property type="entry name" value="GAD"/>
    <property type="match status" value="1"/>
</dbReference>
<dbReference type="Pfam" id="PF00152">
    <property type="entry name" value="tRNA-synt_2"/>
    <property type="match status" value="1"/>
</dbReference>
<dbReference type="Pfam" id="PF01336">
    <property type="entry name" value="tRNA_anti-codon"/>
    <property type="match status" value="1"/>
</dbReference>
<dbReference type="PRINTS" id="PR01042">
    <property type="entry name" value="TRNASYNTHASP"/>
</dbReference>
<dbReference type="SUPFAM" id="SSF55681">
    <property type="entry name" value="Class II aaRS and biotin synthetases"/>
    <property type="match status" value="1"/>
</dbReference>
<dbReference type="SUPFAM" id="SSF55261">
    <property type="entry name" value="GAD domain-like"/>
    <property type="match status" value="1"/>
</dbReference>
<dbReference type="SUPFAM" id="SSF50249">
    <property type="entry name" value="Nucleic acid-binding proteins"/>
    <property type="match status" value="1"/>
</dbReference>
<dbReference type="PROSITE" id="PS50862">
    <property type="entry name" value="AA_TRNA_LIGASE_II"/>
    <property type="match status" value="1"/>
</dbReference>
<keyword id="KW-0030">Aminoacyl-tRNA synthetase</keyword>
<keyword id="KW-0067">ATP-binding</keyword>
<keyword id="KW-0963">Cytoplasm</keyword>
<keyword id="KW-0436">Ligase</keyword>
<keyword id="KW-0547">Nucleotide-binding</keyword>
<keyword id="KW-0648">Protein biosynthesis</keyword>
<accession>B4UIE3</accession>
<name>SYDND_ANASK</name>
<evidence type="ECO:0000255" key="1">
    <source>
        <dbReference type="HAMAP-Rule" id="MF_00044"/>
    </source>
</evidence>
<organism>
    <name type="scientific">Anaeromyxobacter sp. (strain K)</name>
    <dbReference type="NCBI Taxonomy" id="447217"/>
    <lineage>
        <taxon>Bacteria</taxon>
        <taxon>Pseudomonadati</taxon>
        <taxon>Myxococcota</taxon>
        <taxon>Myxococcia</taxon>
        <taxon>Myxococcales</taxon>
        <taxon>Cystobacterineae</taxon>
        <taxon>Anaeromyxobacteraceae</taxon>
        <taxon>Anaeromyxobacter</taxon>
    </lineage>
</organism>